<comment type="function">
    <text evidence="1">Catalyzes quinol oxidation with the concomitant reduction of oxygen to water. Subunit II transfers the electrons from a quinol to the binuclear center of the catalytic subunit I (By similarity).</text>
</comment>
<comment type="catalytic activity">
    <reaction>
        <text>2 a quinol + O2 = 2 a quinone + 2 H2O</text>
        <dbReference type="Rhea" id="RHEA:55376"/>
        <dbReference type="ChEBI" id="CHEBI:15377"/>
        <dbReference type="ChEBI" id="CHEBI:15379"/>
        <dbReference type="ChEBI" id="CHEBI:24646"/>
        <dbReference type="ChEBI" id="CHEBI:132124"/>
    </reaction>
</comment>
<comment type="subcellular location">
    <subcellularLocation>
        <location evidence="3">Cell membrane</location>
        <topology evidence="1">Multi-pass membrane protein</topology>
    </subcellularLocation>
</comment>
<comment type="similarity">
    <text evidence="5">Belongs to the cytochrome c oxidase subunit 2 family.</text>
</comment>
<accession>Q49WI4</accession>
<keyword id="KW-1003">Cell membrane</keyword>
<keyword id="KW-0249">Electron transport</keyword>
<keyword id="KW-0449">Lipoprotein</keyword>
<keyword id="KW-0472">Membrane</keyword>
<keyword id="KW-0560">Oxidoreductase</keyword>
<keyword id="KW-0564">Palmitate</keyword>
<keyword id="KW-1185">Reference proteome</keyword>
<keyword id="KW-0679">Respiratory chain</keyword>
<keyword id="KW-0732">Signal</keyword>
<keyword id="KW-0812">Transmembrane</keyword>
<keyword id="KW-1133">Transmembrane helix</keyword>
<keyword id="KW-0813">Transport</keyword>
<feature type="signal peptide" evidence="3">
    <location>
        <begin position="1"/>
        <end position="19"/>
    </location>
</feature>
<feature type="chain" id="PRO_0000275883" description="Probable quinol oxidase subunit 2">
    <location>
        <begin position="20"/>
        <end position="373"/>
    </location>
</feature>
<feature type="transmembrane region" description="Helical" evidence="2">
    <location>
        <begin position="38"/>
        <end position="58"/>
    </location>
</feature>
<feature type="transmembrane region" description="Helical" evidence="2">
    <location>
        <begin position="82"/>
        <end position="102"/>
    </location>
</feature>
<feature type="region of interest" description="Disordered" evidence="4">
    <location>
        <begin position="292"/>
        <end position="373"/>
    </location>
</feature>
<feature type="compositionally biased region" description="Basic and acidic residues" evidence="4">
    <location>
        <begin position="292"/>
        <end position="320"/>
    </location>
</feature>
<feature type="compositionally biased region" description="Basic and acidic residues" evidence="4">
    <location>
        <begin position="339"/>
        <end position="373"/>
    </location>
</feature>
<feature type="lipid moiety-binding region" description="N-palmitoyl cysteine" evidence="3">
    <location>
        <position position="20"/>
    </location>
</feature>
<feature type="lipid moiety-binding region" description="S-diacylglycerol cysteine" evidence="3">
    <location>
        <position position="20"/>
    </location>
</feature>
<proteinExistence type="inferred from homology"/>
<sequence>MSKFKSLLLLFGSLILLSGCSNVEVLNPKGPMASDSKFLIMYSIIFMLVIIAAVLILFTVFLYKYRIGNTDESGKMHHNSLLETIWFIIPVIIVIALAIPTVNSLYNYEEKPQKEDDPLVVYATSAGYKWFFSYPEEKIETVNHLTIPKDRPVVFKLQSMDMMTSFWIPQLGGQKYAMTGMTMDWTLTASEEGTFRGRNSNFNGEGFSRQTFDVNSVSQSKFEDWVKDAKKQKVLDQDTFDKQLLPTTENKNLTFSGTHLAFVDPAADPEYIFYAYDRYNFVQKDPNFNTEEERTADVLDKPDQPARKPEITNANYERHGMKAMILGNNEPYDSEFKDEESHNMDEMEKISEGAKDEKASKIEKKDHENGGGH</sequence>
<evidence type="ECO:0000250" key="1"/>
<evidence type="ECO:0000255" key="2"/>
<evidence type="ECO:0000255" key="3">
    <source>
        <dbReference type="PROSITE-ProRule" id="PRU00303"/>
    </source>
</evidence>
<evidence type="ECO:0000256" key="4">
    <source>
        <dbReference type="SAM" id="MobiDB-lite"/>
    </source>
</evidence>
<evidence type="ECO:0000305" key="5"/>
<dbReference type="EC" id="1.10.3.-"/>
<dbReference type="EMBL" id="AP008934">
    <property type="protein sequence ID" value="BAE18875.1"/>
    <property type="molecule type" value="Genomic_DNA"/>
</dbReference>
<dbReference type="RefSeq" id="WP_011303443.1">
    <property type="nucleotide sequence ID" value="NC_007350.1"/>
</dbReference>
<dbReference type="SMR" id="Q49WI4"/>
<dbReference type="GeneID" id="3616639"/>
<dbReference type="KEGG" id="ssp:SSP1730"/>
<dbReference type="PATRIC" id="fig|342451.11.peg.1729"/>
<dbReference type="eggNOG" id="COG1622">
    <property type="taxonomic scope" value="Bacteria"/>
</dbReference>
<dbReference type="HOGENOM" id="CLU_036876_6_0_9"/>
<dbReference type="OrthoDB" id="9781261at2"/>
<dbReference type="Proteomes" id="UP000006371">
    <property type="component" value="Chromosome"/>
</dbReference>
<dbReference type="GO" id="GO:0005886">
    <property type="term" value="C:plasma membrane"/>
    <property type="evidence" value="ECO:0007669"/>
    <property type="project" value="UniProtKB-SubCell"/>
</dbReference>
<dbReference type="GO" id="GO:0005507">
    <property type="term" value="F:copper ion binding"/>
    <property type="evidence" value="ECO:0007669"/>
    <property type="project" value="InterPro"/>
</dbReference>
<dbReference type="GO" id="GO:0009486">
    <property type="term" value="F:cytochrome bo3 ubiquinol oxidase activity"/>
    <property type="evidence" value="ECO:0007669"/>
    <property type="project" value="InterPro"/>
</dbReference>
<dbReference type="GO" id="GO:0004129">
    <property type="term" value="F:cytochrome-c oxidase activity"/>
    <property type="evidence" value="ECO:0007669"/>
    <property type="project" value="InterPro"/>
</dbReference>
<dbReference type="GO" id="GO:0016682">
    <property type="term" value="F:oxidoreductase activity, acting on diphenols and related substances as donors, oxygen as acceptor"/>
    <property type="evidence" value="ECO:0007669"/>
    <property type="project" value="InterPro"/>
</dbReference>
<dbReference type="GO" id="GO:0042773">
    <property type="term" value="P:ATP synthesis coupled electron transport"/>
    <property type="evidence" value="ECO:0007669"/>
    <property type="project" value="TreeGrafter"/>
</dbReference>
<dbReference type="CDD" id="cd04212">
    <property type="entry name" value="CuRO_UO_II"/>
    <property type="match status" value="1"/>
</dbReference>
<dbReference type="Gene3D" id="1.10.287.90">
    <property type="match status" value="1"/>
</dbReference>
<dbReference type="Gene3D" id="2.60.40.420">
    <property type="entry name" value="Cupredoxins - blue copper proteins"/>
    <property type="match status" value="1"/>
</dbReference>
<dbReference type="InterPro" id="IPR045187">
    <property type="entry name" value="CcO_II"/>
</dbReference>
<dbReference type="InterPro" id="IPR002429">
    <property type="entry name" value="CcO_II-like_C"/>
</dbReference>
<dbReference type="InterPro" id="IPR008972">
    <property type="entry name" value="Cupredoxin"/>
</dbReference>
<dbReference type="InterPro" id="IPR034227">
    <property type="entry name" value="CuRO_UO_II"/>
</dbReference>
<dbReference type="InterPro" id="IPR011759">
    <property type="entry name" value="Cyt_c_oxidase_su2_TM_dom"/>
</dbReference>
<dbReference type="InterPro" id="IPR036257">
    <property type="entry name" value="Cyt_c_oxidase_su2_TM_sf"/>
</dbReference>
<dbReference type="InterPro" id="IPR006332">
    <property type="entry name" value="QoxA"/>
</dbReference>
<dbReference type="NCBIfam" id="TIGR01432">
    <property type="entry name" value="QOXA"/>
    <property type="match status" value="1"/>
</dbReference>
<dbReference type="PANTHER" id="PTHR22888:SF18">
    <property type="entry name" value="CYTOCHROME BO(3) UBIQUINOL OXIDASE SUBUNIT 2"/>
    <property type="match status" value="1"/>
</dbReference>
<dbReference type="PANTHER" id="PTHR22888">
    <property type="entry name" value="CYTOCHROME C OXIDASE, SUBUNIT II"/>
    <property type="match status" value="1"/>
</dbReference>
<dbReference type="Pfam" id="PF00116">
    <property type="entry name" value="COX2"/>
    <property type="match status" value="1"/>
</dbReference>
<dbReference type="Pfam" id="PF02790">
    <property type="entry name" value="COX2_TM"/>
    <property type="match status" value="1"/>
</dbReference>
<dbReference type="SUPFAM" id="SSF49503">
    <property type="entry name" value="Cupredoxins"/>
    <property type="match status" value="1"/>
</dbReference>
<dbReference type="SUPFAM" id="SSF81464">
    <property type="entry name" value="Cytochrome c oxidase subunit II-like, transmembrane region"/>
    <property type="match status" value="1"/>
</dbReference>
<dbReference type="PROSITE" id="PS50857">
    <property type="entry name" value="COX2_CUA"/>
    <property type="match status" value="1"/>
</dbReference>
<dbReference type="PROSITE" id="PS50999">
    <property type="entry name" value="COX2_TM"/>
    <property type="match status" value="1"/>
</dbReference>
<dbReference type="PROSITE" id="PS51257">
    <property type="entry name" value="PROKAR_LIPOPROTEIN"/>
    <property type="match status" value="1"/>
</dbReference>
<gene>
    <name type="primary">qoxA</name>
    <name type="ordered locus">SSP1730</name>
</gene>
<organism>
    <name type="scientific">Staphylococcus saprophyticus subsp. saprophyticus (strain ATCC 15305 / DSM 20229 / NCIMB 8711 / NCTC 7292 / S-41)</name>
    <dbReference type="NCBI Taxonomy" id="342451"/>
    <lineage>
        <taxon>Bacteria</taxon>
        <taxon>Bacillati</taxon>
        <taxon>Bacillota</taxon>
        <taxon>Bacilli</taxon>
        <taxon>Bacillales</taxon>
        <taxon>Staphylococcaceae</taxon>
        <taxon>Staphylococcus</taxon>
    </lineage>
</organism>
<name>QOX2_STAS1</name>
<reference key="1">
    <citation type="journal article" date="2005" name="Proc. Natl. Acad. Sci. U.S.A.">
        <title>Whole genome sequence of Staphylococcus saprophyticus reveals the pathogenesis of uncomplicated urinary tract infection.</title>
        <authorList>
            <person name="Kuroda M."/>
            <person name="Yamashita A."/>
            <person name="Hirakawa H."/>
            <person name="Kumano M."/>
            <person name="Morikawa K."/>
            <person name="Higashide M."/>
            <person name="Maruyama A."/>
            <person name="Inose Y."/>
            <person name="Matoba K."/>
            <person name="Toh H."/>
            <person name="Kuhara S."/>
            <person name="Hattori M."/>
            <person name="Ohta T."/>
        </authorList>
    </citation>
    <scope>NUCLEOTIDE SEQUENCE [LARGE SCALE GENOMIC DNA]</scope>
    <source>
        <strain>ATCC 15305 / DSM 20229 / NCIMB 8711 / NCTC 7292 / S-41</strain>
    </source>
</reference>
<protein>
    <recommendedName>
        <fullName>Probable quinol oxidase subunit 2</fullName>
        <ecNumber>1.10.3.-</ecNumber>
    </recommendedName>
    <alternativeName>
        <fullName>Quinol oxidase polypeptide II</fullName>
    </alternativeName>
</protein>